<sequence>MTNIRKTHPLMKIVNNAFIDLPAPSNISSWWNFGSLLGICLMLQILTGLFLAMHYTSDTATAFSSVTHICRDVNYGWIIRYMHANGASMFFICLFMHVGRGLYYGSYMFLETWNIGVILLFATMATAFMGYVLPWGQMSFWGATVITNLLSAIPYIGTNLVEWIWGGFSVDKATLTRFFAFHFILPFIITALAMVHLLFLHETGSNNPTGISSDVDKIPFHPYYTIKDVLGALLLILVLMLLVLFTPDLLGDPDNYTPANPLNTPPHIKPEWYFLFAYAILRSIPNKLGGVLALVLSILILILMPLLHLSKQRSMMFRPISQCLFWILVADLLTLTWIGGQPVEHPYIIIGQLASIMYFLLILILMPTASTIENNLLKW</sequence>
<protein>
    <recommendedName>
        <fullName>Cytochrome b</fullName>
    </recommendedName>
    <alternativeName>
        <fullName>Complex III subunit 3</fullName>
    </alternativeName>
    <alternativeName>
        <fullName>Complex III subunit III</fullName>
    </alternativeName>
    <alternativeName>
        <fullName>Cytochrome b-c1 complex subunit 3</fullName>
    </alternativeName>
    <alternativeName>
        <fullName>Ubiquinol-cytochrome-c reductase complex cytochrome b subunit</fullName>
    </alternativeName>
</protein>
<gene>
    <name type="primary">MT-CYB</name>
    <name type="synonym">COB</name>
    <name type="synonym">CYTB</name>
    <name type="synonym">MTCYB</name>
</gene>
<feature type="chain" id="PRO_0000254753" description="Cytochrome b">
    <location>
        <begin position="1"/>
        <end position="379"/>
    </location>
</feature>
<feature type="transmembrane region" description="Helical" evidence="2">
    <location>
        <begin position="33"/>
        <end position="53"/>
    </location>
</feature>
<feature type="transmembrane region" description="Helical" evidence="2">
    <location>
        <begin position="77"/>
        <end position="98"/>
    </location>
</feature>
<feature type="transmembrane region" description="Helical" evidence="2">
    <location>
        <begin position="113"/>
        <end position="133"/>
    </location>
</feature>
<feature type="transmembrane region" description="Helical" evidence="2">
    <location>
        <begin position="178"/>
        <end position="198"/>
    </location>
</feature>
<feature type="transmembrane region" description="Helical" evidence="2">
    <location>
        <begin position="226"/>
        <end position="246"/>
    </location>
</feature>
<feature type="transmembrane region" description="Helical" evidence="2">
    <location>
        <begin position="288"/>
        <end position="308"/>
    </location>
</feature>
<feature type="transmembrane region" description="Helical" evidence="2">
    <location>
        <begin position="320"/>
        <end position="340"/>
    </location>
</feature>
<feature type="transmembrane region" description="Helical" evidence="2">
    <location>
        <begin position="347"/>
        <end position="367"/>
    </location>
</feature>
<feature type="binding site" description="axial binding residue" evidence="2">
    <location>
        <position position="83"/>
    </location>
    <ligand>
        <name>heme b</name>
        <dbReference type="ChEBI" id="CHEBI:60344"/>
        <label>b562</label>
    </ligand>
    <ligandPart>
        <name>Fe</name>
        <dbReference type="ChEBI" id="CHEBI:18248"/>
    </ligandPart>
</feature>
<feature type="binding site" description="axial binding residue" evidence="2">
    <location>
        <position position="97"/>
    </location>
    <ligand>
        <name>heme b</name>
        <dbReference type="ChEBI" id="CHEBI:60344"/>
        <label>b566</label>
    </ligand>
    <ligandPart>
        <name>Fe</name>
        <dbReference type="ChEBI" id="CHEBI:18248"/>
    </ligandPart>
</feature>
<feature type="binding site" description="axial binding residue" evidence="2">
    <location>
        <position position="182"/>
    </location>
    <ligand>
        <name>heme b</name>
        <dbReference type="ChEBI" id="CHEBI:60344"/>
        <label>b562</label>
    </ligand>
    <ligandPart>
        <name>Fe</name>
        <dbReference type="ChEBI" id="CHEBI:18248"/>
    </ligandPart>
</feature>
<feature type="binding site" description="axial binding residue" evidence="2">
    <location>
        <position position="196"/>
    </location>
    <ligand>
        <name>heme b</name>
        <dbReference type="ChEBI" id="CHEBI:60344"/>
        <label>b566</label>
    </ligand>
    <ligandPart>
        <name>Fe</name>
        <dbReference type="ChEBI" id="CHEBI:18248"/>
    </ligandPart>
</feature>
<feature type="binding site" evidence="2">
    <location>
        <position position="201"/>
    </location>
    <ligand>
        <name>a ubiquinone</name>
        <dbReference type="ChEBI" id="CHEBI:16389"/>
    </ligand>
</feature>
<reference key="1">
    <citation type="journal article" date="2001" name="J. Mammal. Evol.">
        <title>Molecular systematics and phylogenetics of the reduncini (Artiodactyla: Bovidae) inferred from the analysis of mitochondrial cytochrome b gene sequences.</title>
        <authorList>
            <person name="Birungi J."/>
            <person name="Arctander P."/>
        </authorList>
    </citation>
    <scope>NUCLEOTIDE SEQUENCE [GENOMIC DNA]</scope>
</reference>
<dbReference type="EMBL" id="AF096628">
    <property type="protein sequence ID" value="AAD27800.1"/>
    <property type="molecule type" value="Genomic_DNA"/>
</dbReference>
<dbReference type="SMR" id="Q9XLE2"/>
<dbReference type="GO" id="GO:0005743">
    <property type="term" value="C:mitochondrial inner membrane"/>
    <property type="evidence" value="ECO:0007669"/>
    <property type="project" value="UniProtKB-SubCell"/>
</dbReference>
<dbReference type="GO" id="GO:0045275">
    <property type="term" value="C:respiratory chain complex III"/>
    <property type="evidence" value="ECO:0007669"/>
    <property type="project" value="InterPro"/>
</dbReference>
<dbReference type="GO" id="GO:0046872">
    <property type="term" value="F:metal ion binding"/>
    <property type="evidence" value="ECO:0007669"/>
    <property type="project" value="UniProtKB-KW"/>
</dbReference>
<dbReference type="GO" id="GO:0008121">
    <property type="term" value="F:ubiquinol-cytochrome-c reductase activity"/>
    <property type="evidence" value="ECO:0007669"/>
    <property type="project" value="InterPro"/>
</dbReference>
<dbReference type="GO" id="GO:0006122">
    <property type="term" value="P:mitochondrial electron transport, ubiquinol to cytochrome c"/>
    <property type="evidence" value="ECO:0007669"/>
    <property type="project" value="TreeGrafter"/>
</dbReference>
<dbReference type="CDD" id="cd00290">
    <property type="entry name" value="cytochrome_b_C"/>
    <property type="match status" value="1"/>
</dbReference>
<dbReference type="CDD" id="cd00284">
    <property type="entry name" value="Cytochrome_b_N"/>
    <property type="match status" value="1"/>
</dbReference>
<dbReference type="FunFam" id="1.20.810.10:FF:000002">
    <property type="entry name" value="Cytochrome b"/>
    <property type="match status" value="1"/>
</dbReference>
<dbReference type="Gene3D" id="1.20.810.10">
    <property type="entry name" value="Cytochrome Bc1 Complex, Chain C"/>
    <property type="match status" value="1"/>
</dbReference>
<dbReference type="InterPro" id="IPR005798">
    <property type="entry name" value="Cyt_b/b6_C"/>
</dbReference>
<dbReference type="InterPro" id="IPR036150">
    <property type="entry name" value="Cyt_b/b6_C_sf"/>
</dbReference>
<dbReference type="InterPro" id="IPR005797">
    <property type="entry name" value="Cyt_b/b6_N"/>
</dbReference>
<dbReference type="InterPro" id="IPR027387">
    <property type="entry name" value="Cytb/b6-like_sf"/>
</dbReference>
<dbReference type="InterPro" id="IPR030689">
    <property type="entry name" value="Cytochrome_b"/>
</dbReference>
<dbReference type="InterPro" id="IPR048260">
    <property type="entry name" value="Cytochrome_b_C_euk/bac"/>
</dbReference>
<dbReference type="InterPro" id="IPR048259">
    <property type="entry name" value="Cytochrome_b_N_euk/bac"/>
</dbReference>
<dbReference type="InterPro" id="IPR016174">
    <property type="entry name" value="Di-haem_cyt_TM"/>
</dbReference>
<dbReference type="PANTHER" id="PTHR19271">
    <property type="entry name" value="CYTOCHROME B"/>
    <property type="match status" value="1"/>
</dbReference>
<dbReference type="PANTHER" id="PTHR19271:SF16">
    <property type="entry name" value="CYTOCHROME B"/>
    <property type="match status" value="1"/>
</dbReference>
<dbReference type="Pfam" id="PF00032">
    <property type="entry name" value="Cytochrom_B_C"/>
    <property type="match status" value="1"/>
</dbReference>
<dbReference type="Pfam" id="PF00033">
    <property type="entry name" value="Cytochrome_B"/>
    <property type="match status" value="1"/>
</dbReference>
<dbReference type="PIRSF" id="PIRSF038885">
    <property type="entry name" value="COB"/>
    <property type="match status" value="1"/>
</dbReference>
<dbReference type="SUPFAM" id="SSF81648">
    <property type="entry name" value="a domain/subunit of cytochrome bc1 complex (Ubiquinol-cytochrome c reductase)"/>
    <property type="match status" value="1"/>
</dbReference>
<dbReference type="SUPFAM" id="SSF81342">
    <property type="entry name" value="Transmembrane di-heme cytochromes"/>
    <property type="match status" value="1"/>
</dbReference>
<dbReference type="PROSITE" id="PS51003">
    <property type="entry name" value="CYTB_CTER"/>
    <property type="match status" value="1"/>
</dbReference>
<dbReference type="PROSITE" id="PS51002">
    <property type="entry name" value="CYTB_NTER"/>
    <property type="match status" value="1"/>
</dbReference>
<geneLocation type="mitochondrion"/>
<name>CYB_REDAR</name>
<keyword id="KW-0249">Electron transport</keyword>
<keyword id="KW-0349">Heme</keyword>
<keyword id="KW-0408">Iron</keyword>
<keyword id="KW-0472">Membrane</keyword>
<keyword id="KW-0479">Metal-binding</keyword>
<keyword id="KW-0496">Mitochondrion</keyword>
<keyword id="KW-0999">Mitochondrion inner membrane</keyword>
<keyword id="KW-0679">Respiratory chain</keyword>
<keyword id="KW-0812">Transmembrane</keyword>
<keyword id="KW-1133">Transmembrane helix</keyword>
<keyword id="KW-0813">Transport</keyword>
<keyword id="KW-0830">Ubiquinone</keyword>
<proteinExistence type="inferred from homology"/>
<evidence type="ECO:0000250" key="1"/>
<evidence type="ECO:0000250" key="2">
    <source>
        <dbReference type="UniProtKB" id="P00157"/>
    </source>
</evidence>
<evidence type="ECO:0000255" key="3">
    <source>
        <dbReference type="PROSITE-ProRule" id="PRU00967"/>
    </source>
</evidence>
<evidence type="ECO:0000255" key="4">
    <source>
        <dbReference type="PROSITE-ProRule" id="PRU00968"/>
    </source>
</evidence>
<comment type="function">
    <text evidence="2">Component of the ubiquinol-cytochrome c reductase complex (complex III or cytochrome b-c1 complex) that is part of the mitochondrial respiratory chain. The b-c1 complex mediates electron transfer from ubiquinol to cytochrome c. Contributes to the generation of a proton gradient across the mitochondrial membrane that is then used for ATP synthesis.</text>
</comment>
<comment type="cofactor">
    <cofactor evidence="2">
        <name>heme b</name>
        <dbReference type="ChEBI" id="CHEBI:60344"/>
    </cofactor>
    <text evidence="2">Binds 2 heme b groups non-covalently.</text>
</comment>
<comment type="subunit">
    <text evidence="2">The cytochrome bc1 complex contains 11 subunits: 3 respiratory subunits (MT-CYB, CYC1 and UQCRFS1), 2 core proteins (UQCRC1 and UQCRC2) and 6 low-molecular weight proteins (UQCRH/QCR6, UQCRB/QCR7, UQCRQ/QCR8, UQCR10/QCR9, UQCR11/QCR10 and a cleavage product of UQCRFS1). This cytochrome bc1 complex then forms a dimer.</text>
</comment>
<comment type="subcellular location">
    <subcellularLocation>
        <location evidence="2">Mitochondrion inner membrane</location>
        <topology evidence="2">Multi-pass membrane protein</topology>
    </subcellularLocation>
</comment>
<comment type="miscellaneous">
    <text evidence="1">Heme 1 (or BL or b562) is low-potential and absorbs at about 562 nm, and heme 2 (or BH or b566) is high-potential and absorbs at about 566 nm.</text>
</comment>
<comment type="similarity">
    <text evidence="3 4">Belongs to the cytochrome b family.</text>
</comment>
<comment type="caution">
    <text evidence="2">The full-length protein contains only eight transmembrane helices, not nine as predicted by bioinformatics tools.</text>
</comment>
<accession>Q9XLE2</accession>
<organism>
    <name type="scientific">Redunca arundinum</name>
    <name type="common">Southern reedbuck</name>
    <dbReference type="NCBI Taxonomy" id="59554"/>
    <lineage>
        <taxon>Eukaryota</taxon>
        <taxon>Metazoa</taxon>
        <taxon>Chordata</taxon>
        <taxon>Craniata</taxon>
        <taxon>Vertebrata</taxon>
        <taxon>Euteleostomi</taxon>
        <taxon>Mammalia</taxon>
        <taxon>Eutheria</taxon>
        <taxon>Laurasiatheria</taxon>
        <taxon>Artiodactyla</taxon>
        <taxon>Ruminantia</taxon>
        <taxon>Pecora</taxon>
        <taxon>Bovidae</taxon>
        <taxon>Reduncinae</taxon>
        <taxon>Redunca</taxon>
    </lineage>
</organism>